<sequence length="296" mass="32585">MTLFKGSGVALVTPFKDGKVNFKKLEEILNWHVECGTDAIIVCGTTGEASTMTEEERKETIKFTVDTINKRIPVIAGTGSNNTEAAIKMSKWAESIGVDGVLVITPYYNKTTQKGIFEHFKAINDSINIPIVLYNVPSRTGLNITPKTLLKLCDLNNVVAIKEASGNFSQLVEMKALCRDKIDLYSGNDDQVVPLLSLGGIGVISVAANIYPKEMHDICDLYMNGKTHEALKIQLDMLDVINSLFIETNPIPIKTAMNLKGMDVGALRLPLCDMEENNLEVLKNALENYNKTSREA</sequence>
<gene>
    <name evidence="1" type="primary">dapA</name>
    <name type="ordered locus">NT01CX_1746</name>
</gene>
<keyword id="KW-0028">Amino-acid biosynthesis</keyword>
<keyword id="KW-0963">Cytoplasm</keyword>
<keyword id="KW-0220">Diaminopimelate biosynthesis</keyword>
<keyword id="KW-0456">Lyase</keyword>
<keyword id="KW-0457">Lysine biosynthesis</keyword>
<keyword id="KW-1185">Reference proteome</keyword>
<keyword id="KW-0704">Schiff base</keyword>
<comment type="function">
    <text evidence="1">Catalyzes the condensation of (S)-aspartate-beta-semialdehyde [(S)-ASA] and pyruvate to 4-hydroxy-tetrahydrodipicolinate (HTPA).</text>
</comment>
<comment type="catalytic activity">
    <reaction evidence="1">
        <text>L-aspartate 4-semialdehyde + pyruvate = (2S,4S)-4-hydroxy-2,3,4,5-tetrahydrodipicolinate + H2O + H(+)</text>
        <dbReference type="Rhea" id="RHEA:34171"/>
        <dbReference type="ChEBI" id="CHEBI:15361"/>
        <dbReference type="ChEBI" id="CHEBI:15377"/>
        <dbReference type="ChEBI" id="CHEBI:15378"/>
        <dbReference type="ChEBI" id="CHEBI:67139"/>
        <dbReference type="ChEBI" id="CHEBI:537519"/>
        <dbReference type="EC" id="4.3.3.7"/>
    </reaction>
</comment>
<comment type="pathway">
    <text evidence="1">Amino-acid biosynthesis; L-lysine biosynthesis via DAP pathway; (S)-tetrahydrodipicolinate from L-aspartate: step 3/4.</text>
</comment>
<comment type="subunit">
    <text evidence="1">Homotetramer; dimer of dimers.</text>
</comment>
<comment type="subcellular location">
    <subcellularLocation>
        <location evidence="1">Cytoplasm</location>
    </subcellularLocation>
</comment>
<comment type="similarity">
    <text evidence="1">Belongs to the DapA family.</text>
</comment>
<comment type="caution">
    <text evidence="2">Was originally thought to be a dihydrodipicolinate synthase (DHDPS), catalyzing the condensation of (S)-aspartate-beta-semialdehyde [(S)-ASA] and pyruvate to dihydrodipicolinate (DHDP). However, it was shown in E.coli that the product of the enzymatic reaction is not dihydrodipicolinate but in fact (4S)-4-hydroxy-2,3,4,5-tetrahydro-(2S)-dipicolinic acid (HTPA), and that the consecutive dehydration reaction leading to DHDP is not spontaneous but catalyzed by DapB.</text>
</comment>
<feature type="chain" id="PRO_1000050178" description="4-hydroxy-tetrahydrodipicolinate synthase">
    <location>
        <begin position="1"/>
        <end position="296"/>
    </location>
</feature>
<feature type="active site" description="Proton donor/acceptor" evidence="1">
    <location>
        <position position="134"/>
    </location>
</feature>
<feature type="active site" description="Schiff-base intermediate with substrate" evidence="1">
    <location>
        <position position="162"/>
    </location>
</feature>
<feature type="binding site" evidence="1">
    <location>
        <position position="46"/>
    </location>
    <ligand>
        <name>pyruvate</name>
        <dbReference type="ChEBI" id="CHEBI:15361"/>
    </ligand>
</feature>
<feature type="binding site" evidence="1">
    <location>
        <position position="204"/>
    </location>
    <ligand>
        <name>pyruvate</name>
        <dbReference type="ChEBI" id="CHEBI:15361"/>
    </ligand>
</feature>
<feature type="site" description="Part of a proton relay during catalysis" evidence="1">
    <location>
        <position position="45"/>
    </location>
</feature>
<feature type="site" description="Part of a proton relay during catalysis" evidence="1">
    <location>
        <position position="108"/>
    </location>
</feature>
<name>DAPA_CLONN</name>
<dbReference type="EC" id="4.3.3.7" evidence="1"/>
<dbReference type="EMBL" id="CP000382">
    <property type="protein sequence ID" value="ABK61511.1"/>
    <property type="molecule type" value="Genomic_DNA"/>
</dbReference>
<dbReference type="RefSeq" id="WP_011721830.1">
    <property type="nucleotide sequence ID" value="NC_008593.1"/>
</dbReference>
<dbReference type="SMR" id="A0PZM3"/>
<dbReference type="STRING" id="386415.NT01CX_1746"/>
<dbReference type="KEGG" id="cno:NT01CX_1746"/>
<dbReference type="eggNOG" id="COG0329">
    <property type="taxonomic scope" value="Bacteria"/>
</dbReference>
<dbReference type="HOGENOM" id="CLU_049343_7_1_9"/>
<dbReference type="UniPathway" id="UPA00034">
    <property type="reaction ID" value="UER00017"/>
</dbReference>
<dbReference type="Proteomes" id="UP000008220">
    <property type="component" value="Chromosome"/>
</dbReference>
<dbReference type="GO" id="GO:0005829">
    <property type="term" value="C:cytosol"/>
    <property type="evidence" value="ECO:0007669"/>
    <property type="project" value="TreeGrafter"/>
</dbReference>
<dbReference type="GO" id="GO:0008840">
    <property type="term" value="F:4-hydroxy-tetrahydrodipicolinate synthase activity"/>
    <property type="evidence" value="ECO:0007669"/>
    <property type="project" value="UniProtKB-UniRule"/>
</dbReference>
<dbReference type="GO" id="GO:0019877">
    <property type="term" value="P:diaminopimelate biosynthetic process"/>
    <property type="evidence" value="ECO:0007669"/>
    <property type="project" value="UniProtKB-UniRule"/>
</dbReference>
<dbReference type="GO" id="GO:0009089">
    <property type="term" value="P:lysine biosynthetic process via diaminopimelate"/>
    <property type="evidence" value="ECO:0007669"/>
    <property type="project" value="UniProtKB-UniRule"/>
</dbReference>
<dbReference type="CDD" id="cd00950">
    <property type="entry name" value="DHDPS"/>
    <property type="match status" value="1"/>
</dbReference>
<dbReference type="Gene3D" id="3.20.20.70">
    <property type="entry name" value="Aldolase class I"/>
    <property type="match status" value="1"/>
</dbReference>
<dbReference type="HAMAP" id="MF_00418">
    <property type="entry name" value="DapA"/>
    <property type="match status" value="1"/>
</dbReference>
<dbReference type="InterPro" id="IPR013785">
    <property type="entry name" value="Aldolase_TIM"/>
</dbReference>
<dbReference type="InterPro" id="IPR005263">
    <property type="entry name" value="DapA"/>
</dbReference>
<dbReference type="InterPro" id="IPR002220">
    <property type="entry name" value="DapA-like"/>
</dbReference>
<dbReference type="InterPro" id="IPR020625">
    <property type="entry name" value="Schiff_base-form_aldolases_AS"/>
</dbReference>
<dbReference type="InterPro" id="IPR020624">
    <property type="entry name" value="Schiff_base-form_aldolases_CS"/>
</dbReference>
<dbReference type="NCBIfam" id="TIGR00674">
    <property type="entry name" value="dapA"/>
    <property type="match status" value="1"/>
</dbReference>
<dbReference type="PANTHER" id="PTHR12128:SF66">
    <property type="entry name" value="4-HYDROXY-2-OXOGLUTARATE ALDOLASE, MITOCHONDRIAL"/>
    <property type="match status" value="1"/>
</dbReference>
<dbReference type="PANTHER" id="PTHR12128">
    <property type="entry name" value="DIHYDRODIPICOLINATE SYNTHASE"/>
    <property type="match status" value="1"/>
</dbReference>
<dbReference type="Pfam" id="PF00701">
    <property type="entry name" value="DHDPS"/>
    <property type="match status" value="1"/>
</dbReference>
<dbReference type="PIRSF" id="PIRSF001365">
    <property type="entry name" value="DHDPS"/>
    <property type="match status" value="1"/>
</dbReference>
<dbReference type="PRINTS" id="PR00146">
    <property type="entry name" value="DHPICSNTHASE"/>
</dbReference>
<dbReference type="SMART" id="SM01130">
    <property type="entry name" value="DHDPS"/>
    <property type="match status" value="1"/>
</dbReference>
<dbReference type="SUPFAM" id="SSF51569">
    <property type="entry name" value="Aldolase"/>
    <property type="match status" value="1"/>
</dbReference>
<dbReference type="PROSITE" id="PS00665">
    <property type="entry name" value="DHDPS_1"/>
    <property type="match status" value="1"/>
</dbReference>
<dbReference type="PROSITE" id="PS00666">
    <property type="entry name" value="DHDPS_2"/>
    <property type="match status" value="1"/>
</dbReference>
<accession>A0PZM3</accession>
<proteinExistence type="inferred from homology"/>
<organism>
    <name type="scientific">Clostridium novyi (strain NT)</name>
    <dbReference type="NCBI Taxonomy" id="386415"/>
    <lineage>
        <taxon>Bacteria</taxon>
        <taxon>Bacillati</taxon>
        <taxon>Bacillota</taxon>
        <taxon>Clostridia</taxon>
        <taxon>Eubacteriales</taxon>
        <taxon>Clostridiaceae</taxon>
        <taxon>Clostridium</taxon>
    </lineage>
</organism>
<protein>
    <recommendedName>
        <fullName evidence="1">4-hydroxy-tetrahydrodipicolinate synthase</fullName>
        <shortName evidence="1">HTPA synthase</shortName>
        <ecNumber evidence="1">4.3.3.7</ecNumber>
    </recommendedName>
</protein>
<reference key="1">
    <citation type="journal article" date="2006" name="Nat. Biotechnol.">
        <title>The genome and transcriptomes of the anti-tumor agent Clostridium novyi-NT.</title>
        <authorList>
            <person name="Bettegowda C."/>
            <person name="Huang X."/>
            <person name="Lin J."/>
            <person name="Cheong I."/>
            <person name="Kohli M."/>
            <person name="Szabo S.A."/>
            <person name="Zhang X."/>
            <person name="Diaz L.A. Jr."/>
            <person name="Velculescu V.E."/>
            <person name="Parmigiani G."/>
            <person name="Kinzler K.W."/>
            <person name="Vogelstein B."/>
            <person name="Zhou S."/>
        </authorList>
    </citation>
    <scope>NUCLEOTIDE SEQUENCE [LARGE SCALE GENOMIC DNA]</scope>
    <source>
        <strain>NT</strain>
    </source>
</reference>
<evidence type="ECO:0000255" key="1">
    <source>
        <dbReference type="HAMAP-Rule" id="MF_00418"/>
    </source>
</evidence>
<evidence type="ECO:0000305" key="2"/>